<accession>Q31LM3</accession>
<proteinExistence type="inferred from homology"/>
<dbReference type="EMBL" id="CP000100">
    <property type="protein sequence ID" value="ABB58046.1"/>
    <property type="molecule type" value="Genomic_DNA"/>
</dbReference>
<dbReference type="RefSeq" id="WP_011244389.1">
    <property type="nucleotide sequence ID" value="NZ_JACJTX010000001.1"/>
</dbReference>
<dbReference type="SMR" id="Q31LM3"/>
<dbReference type="STRING" id="1140.Synpcc7942_2016"/>
<dbReference type="PaxDb" id="1140-Synpcc7942_2016"/>
<dbReference type="KEGG" id="syf:Synpcc7942_2016"/>
<dbReference type="HOGENOM" id="CLU_212837_1_0_3"/>
<dbReference type="BioCyc" id="MetaCyc:SYNPCC7942_2016-MONOMER"/>
<dbReference type="BioCyc" id="SYNEL:SYNPCC7942_2016-MONOMER"/>
<dbReference type="Proteomes" id="UP000889800">
    <property type="component" value="Chromosome"/>
</dbReference>
<dbReference type="GO" id="GO:0009523">
    <property type="term" value="C:photosystem II"/>
    <property type="evidence" value="ECO:0007669"/>
    <property type="project" value="UniProtKB-KW"/>
</dbReference>
<dbReference type="GO" id="GO:0031676">
    <property type="term" value="C:plasma membrane-derived thylakoid membrane"/>
    <property type="evidence" value="ECO:0007669"/>
    <property type="project" value="UniProtKB-SubCell"/>
</dbReference>
<dbReference type="GO" id="GO:0015979">
    <property type="term" value="P:photosynthesis"/>
    <property type="evidence" value="ECO:0007669"/>
    <property type="project" value="UniProtKB-UniRule"/>
</dbReference>
<dbReference type="Gene3D" id="1.20.5.510">
    <property type="entry name" value="Single helix bin"/>
    <property type="match status" value="1"/>
</dbReference>
<dbReference type="HAMAP" id="MF_01386">
    <property type="entry name" value="PSII_PsbX_1"/>
    <property type="match status" value="1"/>
</dbReference>
<dbReference type="InterPro" id="IPR009518">
    <property type="entry name" value="PSII_PsbX"/>
</dbReference>
<dbReference type="InterPro" id="IPR023431">
    <property type="entry name" value="PSII_PsbX_type_1_subfam"/>
</dbReference>
<dbReference type="Pfam" id="PF06596">
    <property type="entry name" value="PsbX"/>
    <property type="match status" value="1"/>
</dbReference>
<feature type="chain" id="PRO_0000345377" description="Photosystem II reaction center protein X">
    <location>
        <begin position="1"/>
        <end position="39"/>
    </location>
</feature>
<feature type="transmembrane region" description="Helical" evidence="1">
    <location>
        <begin position="8"/>
        <end position="28"/>
    </location>
</feature>
<name>PSBX_SYNE7</name>
<gene>
    <name evidence="1" type="primary">psbX</name>
    <name type="ordered locus">Synpcc7942_2016</name>
</gene>
<reference key="1">
    <citation type="submission" date="2005-08" db="EMBL/GenBank/DDBJ databases">
        <title>Complete sequence of chromosome 1 of Synechococcus elongatus PCC 7942.</title>
        <authorList>
            <consortium name="US DOE Joint Genome Institute"/>
            <person name="Copeland A."/>
            <person name="Lucas S."/>
            <person name="Lapidus A."/>
            <person name="Barry K."/>
            <person name="Detter J.C."/>
            <person name="Glavina T."/>
            <person name="Hammon N."/>
            <person name="Israni S."/>
            <person name="Pitluck S."/>
            <person name="Schmutz J."/>
            <person name="Larimer F."/>
            <person name="Land M."/>
            <person name="Kyrpides N."/>
            <person name="Lykidis A."/>
            <person name="Golden S."/>
            <person name="Richardson P."/>
        </authorList>
    </citation>
    <scope>NUCLEOTIDE SEQUENCE [LARGE SCALE GENOMIC DNA]</scope>
    <source>
        <strain>ATCC 33912 / PCC 7942 / FACHB-805</strain>
    </source>
</reference>
<comment type="function">
    <text evidence="1">Involved in the binding and/or turnover of quinones at the Q(B) site of photosystem II (PSII). PSII is a light-driven water plastoquinone oxidoreductase, using light energy to abstract electrons from H(2)O, generating a proton gradient subsequently used for ATP formation.</text>
</comment>
<comment type="subunit">
    <text evidence="1">PSII is composed of 1 copy each of membrane proteins PsbA, PsbB, PsbC, PsbD, PsbE, PsbF, PsbH, PsbI, PsbJ, PsbK, PsbL, PsbM, PsbT, PsbX, PsbY, PsbZ, Psb30/Ycf12, peripheral proteins PsbO, CyanoQ (PsbQ), PsbU, PsbV and a large number of cofactors. It forms dimeric complexes.</text>
</comment>
<comment type="subcellular location">
    <subcellularLocation>
        <location evidence="1">Cellular thylakoid membrane</location>
        <topology evidence="1">Single-pass membrane protein</topology>
    </subcellularLocation>
</comment>
<comment type="similarity">
    <text evidence="1">Belongs to the PsbX family. Type 1 subfamily.</text>
</comment>
<organism>
    <name type="scientific">Synechococcus elongatus (strain ATCC 33912 / PCC 7942 / FACHB-805)</name>
    <name type="common">Anacystis nidulans R2</name>
    <dbReference type="NCBI Taxonomy" id="1140"/>
    <lineage>
        <taxon>Bacteria</taxon>
        <taxon>Bacillati</taxon>
        <taxon>Cyanobacteriota</taxon>
        <taxon>Cyanophyceae</taxon>
        <taxon>Synechococcales</taxon>
        <taxon>Synechococcaceae</taxon>
        <taxon>Synechococcus</taxon>
    </lineage>
</organism>
<keyword id="KW-0472">Membrane</keyword>
<keyword id="KW-0602">Photosynthesis</keyword>
<keyword id="KW-0604">Photosystem II</keyword>
<keyword id="KW-1185">Reference proteome</keyword>
<keyword id="KW-0793">Thylakoid</keyword>
<keyword id="KW-0812">Transmembrane</keyword>
<keyword id="KW-1133">Transmembrane helix</keyword>
<protein>
    <recommendedName>
        <fullName evidence="1">Photosystem II reaction center protein X</fullName>
    </recommendedName>
</protein>
<sequence>MTPTLSAFIWSLVLGGVIVVIPLTVALIFISQTDKVRRS</sequence>
<evidence type="ECO:0000255" key="1">
    <source>
        <dbReference type="HAMAP-Rule" id="MF_01386"/>
    </source>
</evidence>